<organism>
    <name type="scientific">Enterocytozoon bieneusi (strain H348)</name>
    <name type="common">Microsporidian parasite</name>
    <dbReference type="NCBI Taxonomy" id="481877"/>
    <lineage>
        <taxon>Eukaryota</taxon>
        <taxon>Fungi</taxon>
        <taxon>Fungi incertae sedis</taxon>
        <taxon>Microsporidia</taxon>
        <taxon>Enterocytozoonidae</taxon>
        <taxon>Enterocytozoon</taxon>
    </lineage>
</organism>
<proteinExistence type="inferred from homology"/>
<name>RSSA_ENTBH</name>
<reference key="1">
    <citation type="journal article" date="2007" name="PLoS ONE">
        <title>Patterns of genome evolution among the microsporidian parasites Encephalitozoon cuniculi, Antonospora locustae and Enterocytozoon bieneusi.</title>
        <authorList>
            <person name="Corradi N."/>
            <person name="Akiyoshi D.E."/>
            <person name="Morrison H.G."/>
            <person name="Feng X."/>
            <person name="Weiss L.M."/>
            <person name="Tzipori S."/>
            <person name="Keeling P.J."/>
        </authorList>
    </citation>
    <scope>NUCLEOTIDE SEQUENCE [LARGE SCALE GENOMIC DNA]</scope>
    <source>
        <strain>H348</strain>
    </source>
</reference>
<reference key="2">
    <citation type="journal article" date="2009" name="PLoS Pathog.">
        <title>Genomic survey of the non-cultivatable opportunistic human pathogen, Enterocytozoon bieneusi.</title>
        <authorList>
            <person name="Akiyoshi D.E."/>
            <person name="Morrison H.G."/>
            <person name="Lei S."/>
            <person name="Feng X."/>
            <person name="Zhang Q."/>
            <person name="Corradi N."/>
            <person name="Mayanja H."/>
            <person name="Tumwine J.K."/>
            <person name="Keeling P.J."/>
            <person name="Weiss L.M."/>
            <person name="Tzipori S."/>
        </authorList>
    </citation>
    <scope>NUCLEOTIDE SEQUENCE [LARGE SCALE GENOMIC DNA]</scope>
    <source>
        <strain>H348</strain>
    </source>
</reference>
<dbReference type="EMBL" id="ABGB01000016">
    <property type="protein sequence ID" value="EED44404.1"/>
    <property type="molecule type" value="Genomic_DNA"/>
</dbReference>
<dbReference type="RefSeq" id="XP_002649572.1">
    <property type="nucleotide sequence ID" value="XM_002649526.1"/>
</dbReference>
<dbReference type="SMR" id="B7XHU4"/>
<dbReference type="FunCoup" id="B7XHU4">
    <property type="interactions" value="221"/>
</dbReference>
<dbReference type="STRING" id="481877.B7XHU4"/>
<dbReference type="VEuPathDB" id="MicrosporidiaDB:EBI_22833"/>
<dbReference type="HOGENOM" id="CLU_058171_2_0_1"/>
<dbReference type="InParanoid" id="B7XHU4"/>
<dbReference type="OMA" id="VKNFFEP"/>
<dbReference type="OrthoDB" id="414863at2759"/>
<dbReference type="GO" id="GO:0022627">
    <property type="term" value="C:cytosolic small ribosomal subunit"/>
    <property type="evidence" value="ECO:0007669"/>
    <property type="project" value="UniProtKB-UniRule"/>
</dbReference>
<dbReference type="GO" id="GO:0003735">
    <property type="term" value="F:structural constituent of ribosome"/>
    <property type="evidence" value="ECO:0007669"/>
    <property type="project" value="UniProtKB-UniRule"/>
</dbReference>
<dbReference type="GO" id="GO:0000028">
    <property type="term" value="P:ribosomal small subunit assembly"/>
    <property type="evidence" value="ECO:0007669"/>
    <property type="project" value="UniProtKB-UniRule"/>
</dbReference>
<dbReference type="GO" id="GO:0006412">
    <property type="term" value="P:translation"/>
    <property type="evidence" value="ECO:0007669"/>
    <property type="project" value="UniProtKB-UniRule"/>
</dbReference>
<dbReference type="CDD" id="cd01425">
    <property type="entry name" value="RPS2"/>
    <property type="match status" value="1"/>
</dbReference>
<dbReference type="FunFam" id="3.40.50.10490:FF:000030">
    <property type="entry name" value="30S ribosomal protein S2"/>
    <property type="match status" value="1"/>
</dbReference>
<dbReference type="Gene3D" id="3.40.50.10490">
    <property type="entry name" value="Glucose-6-phosphate isomerase like protein, domain 1"/>
    <property type="match status" value="1"/>
</dbReference>
<dbReference type="HAMAP" id="MF_03015">
    <property type="entry name" value="Ribosomal_S2_euk"/>
    <property type="match status" value="1"/>
</dbReference>
<dbReference type="InterPro" id="IPR001865">
    <property type="entry name" value="Ribosomal_uS2"/>
</dbReference>
<dbReference type="InterPro" id="IPR027498">
    <property type="entry name" value="Ribosomal_uS2_euk"/>
</dbReference>
<dbReference type="InterPro" id="IPR005707">
    <property type="entry name" value="Ribosomal_uS2_euk/arc"/>
</dbReference>
<dbReference type="InterPro" id="IPR023591">
    <property type="entry name" value="Ribosomal_uS2_flav_dom_sf"/>
</dbReference>
<dbReference type="PANTHER" id="PTHR11489">
    <property type="entry name" value="40S RIBOSOMAL PROTEIN SA"/>
    <property type="match status" value="1"/>
</dbReference>
<dbReference type="Pfam" id="PF00318">
    <property type="entry name" value="Ribosomal_S2"/>
    <property type="match status" value="2"/>
</dbReference>
<dbReference type="PRINTS" id="PR00395">
    <property type="entry name" value="RIBOSOMALS2"/>
</dbReference>
<dbReference type="SUPFAM" id="SSF52313">
    <property type="entry name" value="Ribosomal protein S2"/>
    <property type="match status" value="1"/>
</dbReference>
<evidence type="ECO:0000255" key="1">
    <source>
        <dbReference type="HAMAP-Rule" id="MF_03015"/>
    </source>
</evidence>
<evidence type="ECO:0000305" key="2"/>
<gene>
    <name evidence="1" type="primary">RPS0</name>
    <name type="ORF">EBI_22833</name>
</gene>
<feature type="chain" id="PRO_0000389276" description="Small ribosomal subunit protein uS2">
    <location>
        <begin position="1"/>
        <end position="240"/>
    </location>
</feature>
<accession>B7XHU4</accession>
<comment type="function">
    <text evidence="1">Required for the assembly and/or stability of the 40S ribosomal subunit. Required for the processing of the 20S rRNA-precursor to mature 18S rRNA in a late step of the maturation of 40S ribosomal subunits.</text>
</comment>
<comment type="subunit">
    <text evidence="1">Component of the small ribosomal subunit. Mature ribosomes consist of a small (40S) and a large (60S) subunit. The 40S subunit contains about 33 different proteins and 1 molecule of RNA (18S). The 60S subunit contains about 49 different proteins and 3 molecules of RNA (25S, 5.8S and 5S). Interacts with RPS21.</text>
</comment>
<comment type="subcellular location">
    <subcellularLocation>
        <location evidence="1">Cytoplasm</location>
    </subcellularLocation>
</comment>
<comment type="similarity">
    <text evidence="1">Belongs to the universal ribosomal protein uS2 family.</text>
</comment>
<keyword id="KW-0963">Cytoplasm</keyword>
<keyword id="KW-0687">Ribonucleoprotein</keyword>
<keyword id="KW-0689">Ribosomal protein</keyword>
<protein>
    <recommendedName>
        <fullName evidence="1">Small ribosomal subunit protein uS2</fullName>
    </recommendedName>
    <alternativeName>
        <fullName evidence="2">40S ribosomal protein S0</fullName>
    </alternativeName>
</protein>
<sequence>MSDSSIKMPPVFGKLLLATQAHLGGVKVTKPMKKYIYGERQDKVSVFDLKKTWDKFILAARAFCGLNYGDDVTVISCKTFGKKPVLKFAETTGAKSYTGRFIPGSFTNTTIRNSCEPRLIIVSDPIVDKQAIEEAAKVNCPTIAFCNTDCDLKYVDIAIPLNNRSPKAIGASFFILSRIIRYIKFGTPMDQDIKEVELFFYRDPIELEKLQEDQNEDNYNEIFNKFSNANEDEFGKIIYK</sequence>